<proteinExistence type="inferred from homology"/>
<keyword id="KW-0067">ATP-binding</keyword>
<keyword id="KW-0238">DNA-binding</keyword>
<keyword id="KW-0479">Metal-binding</keyword>
<keyword id="KW-0547">Nucleotide-binding</keyword>
<keyword id="KW-0678">Repressor</keyword>
<keyword id="KW-0804">Transcription</keyword>
<keyword id="KW-0805">Transcription regulation</keyword>
<keyword id="KW-0862">Zinc</keyword>
<keyword id="KW-0863">Zinc-finger</keyword>
<organism>
    <name type="scientific">Thermosipho melanesiensis (strain DSM 12029 / CIP 104789 / BI429)</name>
    <dbReference type="NCBI Taxonomy" id="391009"/>
    <lineage>
        <taxon>Bacteria</taxon>
        <taxon>Thermotogati</taxon>
        <taxon>Thermotogota</taxon>
        <taxon>Thermotogae</taxon>
        <taxon>Thermotogales</taxon>
        <taxon>Fervidobacteriaceae</taxon>
        <taxon>Thermosipho</taxon>
    </lineage>
</organism>
<protein>
    <recommendedName>
        <fullName evidence="1">Transcriptional repressor NrdR</fullName>
    </recommendedName>
</protein>
<reference key="1">
    <citation type="submission" date="2007-05" db="EMBL/GenBank/DDBJ databases">
        <title>Complete sequence of Thermosipho melanesiensis BI429.</title>
        <authorList>
            <consortium name="US DOE Joint Genome Institute"/>
            <person name="Copeland A."/>
            <person name="Lucas S."/>
            <person name="Lapidus A."/>
            <person name="Barry K."/>
            <person name="Glavina del Rio T."/>
            <person name="Dalin E."/>
            <person name="Tice H."/>
            <person name="Pitluck S."/>
            <person name="Chertkov O."/>
            <person name="Brettin T."/>
            <person name="Bruce D."/>
            <person name="Detter J.C."/>
            <person name="Han C."/>
            <person name="Schmutz J."/>
            <person name="Larimer F."/>
            <person name="Land M."/>
            <person name="Hauser L."/>
            <person name="Kyrpides N."/>
            <person name="Mikhailova N."/>
            <person name="Nelson K."/>
            <person name="Gogarten J.P."/>
            <person name="Noll K."/>
            <person name="Richardson P."/>
        </authorList>
    </citation>
    <scope>NUCLEOTIDE SEQUENCE [LARGE SCALE GENOMIC DNA]</scope>
    <source>
        <strain>DSM 12029 / CIP 104789 / BI429</strain>
    </source>
</reference>
<gene>
    <name evidence="1" type="primary">nrdR</name>
    <name type="ordered locus">Tmel_1376</name>
</gene>
<feature type="chain" id="PRO_1000080851" description="Transcriptional repressor NrdR">
    <location>
        <begin position="1"/>
        <end position="151"/>
    </location>
</feature>
<feature type="domain" description="ATP-cone" evidence="1">
    <location>
        <begin position="49"/>
        <end position="139"/>
    </location>
</feature>
<feature type="zinc finger region" evidence="1">
    <location>
        <begin position="3"/>
        <end position="34"/>
    </location>
</feature>
<evidence type="ECO:0000255" key="1">
    <source>
        <dbReference type="HAMAP-Rule" id="MF_00440"/>
    </source>
</evidence>
<sequence length="151" mass="17663">MRCPYCGYEETRVLDSRVDSSGMTVRRRRECVKCKGRFTTYERYEFGPVFVVKKDGKREKFDRAKILNGVMKACEKTNVTLEEIEKLVDDVVNDVQKSGNLEILTLEIGKLVMEKLKKLNGVAYVRFASVYKDFREIDQFLEVVEELKKEK</sequence>
<name>NRDR_THEM4</name>
<comment type="function">
    <text evidence="1">Negatively regulates transcription of bacterial ribonucleotide reductase nrd genes and operons by binding to NrdR-boxes.</text>
</comment>
<comment type="cofactor">
    <cofactor evidence="1">
        <name>Zn(2+)</name>
        <dbReference type="ChEBI" id="CHEBI:29105"/>
    </cofactor>
    <text evidence="1">Binds 1 zinc ion.</text>
</comment>
<comment type="similarity">
    <text evidence="1">Belongs to the NrdR family.</text>
</comment>
<accession>A6LMS2</accession>
<dbReference type="EMBL" id="CP000716">
    <property type="protein sequence ID" value="ABR31223.1"/>
    <property type="molecule type" value="Genomic_DNA"/>
</dbReference>
<dbReference type="RefSeq" id="WP_012057582.1">
    <property type="nucleotide sequence ID" value="NC_009616.1"/>
</dbReference>
<dbReference type="SMR" id="A6LMS2"/>
<dbReference type="STRING" id="391009.Tmel_1376"/>
<dbReference type="KEGG" id="tme:Tmel_1376"/>
<dbReference type="eggNOG" id="COG1327">
    <property type="taxonomic scope" value="Bacteria"/>
</dbReference>
<dbReference type="HOGENOM" id="CLU_108412_0_0_0"/>
<dbReference type="OrthoDB" id="9807461at2"/>
<dbReference type="Proteomes" id="UP000001110">
    <property type="component" value="Chromosome"/>
</dbReference>
<dbReference type="GO" id="GO:0005524">
    <property type="term" value="F:ATP binding"/>
    <property type="evidence" value="ECO:0007669"/>
    <property type="project" value="UniProtKB-KW"/>
</dbReference>
<dbReference type="GO" id="GO:0003677">
    <property type="term" value="F:DNA binding"/>
    <property type="evidence" value="ECO:0007669"/>
    <property type="project" value="UniProtKB-KW"/>
</dbReference>
<dbReference type="GO" id="GO:0008270">
    <property type="term" value="F:zinc ion binding"/>
    <property type="evidence" value="ECO:0007669"/>
    <property type="project" value="UniProtKB-UniRule"/>
</dbReference>
<dbReference type="GO" id="GO:0045892">
    <property type="term" value="P:negative regulation of DNA-templated transcription"/>
    <property type="evidence" value="ECO:0007669"/>
    <property type="project" value="UniProtKB-UniRule"/>
</dbReference>
<dbReference type="HAMAP" id="MF_00440">
    <property type="entry name" value="NrdR"/>
    <property type="match status" value="1"/>
</dbReference>
<dbReference type="InterPro" id="IPR005144">
    <property type="entry name" value="ATP-cone_dom"/>
</dbReference>
<dbReference type="InterPro" id="IPR055173">
    <property type="entry name" value="NrdR-like_N"/>
</dbReference>
<dbReference type="InterPro" id="IPR003796">
    <property type="entry name" value="RNR_NrdR-like"/>
</dbReference>
<dbReference type="NCBIfam" id="TIGR00244">
    <property type="entry name" value="transcriptional regulator NrdR"/>
    <property type="match status" value="1"/>
</dbReference>
<dbReference type="PANTHER" id="PTHR30455">
    <property type="entry name" value="TRANSCRIPTIONAL REPRESSOR NRDR"/>
    <property type="match status" value="1"/>
</dbReference>
<dbReference type="PANTHER" id="PTHR30455:SF2">
    <property type="entry name" value="TRANSCRIPTIONAL REPRESSOR NRDR"/>
    <property type="match status" value="1"/>
</dbReference>
<dbReference type="Pfam" id="PF03477">
    <property type="entry name" value="ATP-cone"/>
    <property type="match status" value="1"/>
</dbReference>
<dbReference type="Pfam" id="PF22811">
    <property type="entry name" value="Zn_ribbon_NrdR"/>
    <property type="match status" value="1"/>
</dbReference>
<dbReference type="PROSITE" id="PS51161">
    <property type="entry name" value="ATP_CONE"/>
    <property type="match status" value="1"/>
</dbReference>